<dbReference type="EC" id="2.3.1.225"/>
<dbReference type="EMBL" id="AAFI02000019">
    <property type="protein sequence ID" value="EAL69000.2"/>
    <property type="status" value="ALT_SEQ"/>
    <property type="molecule type" value="Genomic_DNA"/>
</dbReference>
<dbReference type="RefSeq" id="XP_642865.2">
    <property type="nucleotide sequence ID" value="XM_637773.2"/>
</dbReference>
<dbReference type="SMR" id="Q550R7"/>
<dbReference type="FunCoup" id="Q550R7">
    <property type="interactions" value="112"/>
</dbReference>
<dbReference type="STRING" id="44689.Q550R7"/>
<dbReference type="GlyGen" id="Q550R7">
    <property type="glycosylation" value="10 sites"/>
</dbReference>
<dbReference type="PaxDb" id="44689-DDB0238696"/>
<dbReference type="EnsemblProtists" id="EAL69000">
    <property type="protein sequence ID" value="EAL69000"/>
    <property type="gene ID" value="DDB_G0276997"/>
</dbReference>
<dbReference type="GeneID" id="8620731"/>
<dbReference type="KEGG" id="ddi:DDB_G0276997"/>
<dbReference type="dictyBase" id="DDB_G0276997"/>
<dbReference type="VEuPathDB" id="AmoebaDB:DDB_G0276997"/>
<dbReference type="eggNOG" id="KOG1311">
    <property type="taxonomic scope" value="Eukaryota"/>
</dbReference>
<dbReference type="InParanoid" id="Q550R7"/>
<dbReference type="PRO" id="PR:Q550R7"/>
<dbReference type="Proteomes" id="UP000002195">
    <property type="component" value="Chromosome 2"/>
</dbReference>
<dbReference type="GO" id="GO:0005783">
    <property type="term" value="C:endoplasmic reticulum"/>
    <property type="evidence" value="ECO:0000318"/>
    <property type="project" value="GO_Central"/>
</dbReference>
<dbReference type="GO" id="GO:0005794">
    <property type="term" value="C:Golgi apparatus"/>
    <property type="evidence" value="ECO:0000318"/>
    <property type="project" value="GO_Central"/>
</dbReference>
<dbReference type="GO" id="GO:0016020">
    <property type="term" value="C:membrane"/>
    <property type="evidence" value="ECO:0007669"/>
    <property type="project" value="UniProtKB-SubCell"/>
</dbReference>
<dbReference type="GO" id="GO:0019706">
    <property type="term" value="F:protein-cysteine S-palmitoyltransferase activity"/>
    <property type="evidence" value="ECO:0000318"/>
    <property type="project" value="GO_Central"/>
</dbReference>
<dbReference type="GO" id="GO:0006612">
    <property type="term" value="P:protein targeting to membrane"/>
    <property type="evidence" value="ECO:0000318"/>
    <property type="project" value="GO_Central"/>
</dbReference>
<dbReference type="InterPro" id="IPR001594">
    <property type="entry name" value="Palmitoyltrfase_DHHC"/>
</dbReference>
<dbReference type="InterPro" id="IPR039859">
    <property type="entry name" value="PFA4/ZDH16/20/ERF2-like"/>
</dbReference>
<dbReference type="PANTHER" id="PTHR22883:SF418">
    <property type="entry name" value="ZDHHC-TYPE PALMITOYLTRANSFERASE 1-RELATED"/>
    <property type="match status" value="1"/>
</dbReference>
<dbReference type="PANTHER" id="PTHR22883">
    <property type="entry name" value="ZINC FINGER DHHC DOMAIN CONTAINING PROTEIN"/>
    <property type="match status" value="1"/>
</dbReference>
<dbReference type="Pfam" id="PF01529">
    <property type="entry name" value="DHHC"/>
    <property type="match status" value="1"/>
</dbReference>
<dbReference type="PROSITE" id="PS50216">
    <property type="entry name" value="DHHC"/>
    <property type="match status" value="1"/>
</dbReference>
<evidence type="ECO:0000250" key="1"/>
<evidence type="ECO:0000250" key="2">
    <source>
        <dbReference type="UniProtKB" id="Q9C0B5"/>
    </source>
</evidence>
<evidence type="ECO:0000255" key="3"/>
<evidence type="ECO:0000255" key="4">
    <source>
        <dbReference type="PROSITE-ProRule" id="PRU00067"/>
    </source>
</evidence>
<evidence type="ECO:0000256" key="5">
    <source>
        <dbReference type="SAM" id="MobiDB-lite"/>
    </source>
</evidence>
<evidence type="ECO:0000305" key="6"/>
<protein>
    <recommendedName>
        <fullName>Putative ZDHHC-type palmitoyltransferase 1</fullName>
        <ecNumber>2.3.1.225</ecNumber>
    </recommendedName>
    <alternativeName>
        <fullName>Zinc finger DHHC domain-containing protein 1</fullName>
    </alternativeName>
</protein>
<organism>
    <name type="scientific">Dictyostelium discoideum</name>
    <name type="common">Social amoeba</name>
    <dbReference type="NCBI Taxonomy" id="44689"/>
    <lineage>
        <taxon>Eukaryota</taxon>
        <taxon>Amoebozoa</taxon>
        <taxon>Evosea</taxon>
        <taxon>Eumycetozoa</taxon>
        <taxon>Dictyostelia</taxon>
        <taxon>Dictyosteliales</taxon>
        <taxon>Dictyosteliaceae</taxon>
        <taxon>Dictyostelium</taxon>
    </lineage>
</organism>
<feature type="chain" id="PRO_0000259605" description="Putative ZDHHC-type palmitoyltransferase 1">
    <location>
        <begin position="1"/>
        <end position="434"/>
    </location>
</feature>
<feature type="transmembrane region" description="Helical" evidence="3">
    <location>
        <begin position="25"/>
        <end position="45"/>
    </location>
</feature>
<feature type="transmembrane region" description="Helical" evidence="3">
    <location>
        <begin position="53"/>
        <end position="73"/>
    </location>
</feature>
<feature type="transmembrane region" description="Helical" evidence="3">
    <location>
        <begin position="160"/>
        <end position="180"/>
    </location>
</feature>
<feature type="domain" description="DHHC" evidence="4">
    <location>
        <begin position="115"/>
        <end position="165"/>
    </location>
</feature>
<feature type="region of interest" description="Disordered" evidence="5">
    <location>
        <begin position="262"/>
        <end position="330"/>
    </location>
</feature>
<feature type="region of interest" description="Disordered" evidence="5">
    <location>
        <begin position="365"/>
        <end position="434"/>
    </location>
</feature>
<feature type="compositionally biased region" description="Low complexity" evidence="5">
    <location>
        <begin position="267"/>
        <end position="316"/>
    </location>
</feature>
<feature type="compositionally biased region" description="Low complexity" evidence="5">
    <location>
        <begin position="373"/>
        <end position="387"/>
    </location>
</feature>
<feature type="compositionally biased region" description="Basic and acidic residues" evidence="5">
    <location>
        <begin position="409"/>
        <end position="419"/>
    </location>
</feature>
<feature type="compositionally biased region" description="Polar residues" evidence="5">
    <location>
        <begin position="420"/>
        <end position="434"/>
    </location>
</feature>
<feature type="active site" description="S-palmitoyl cysteine intermediate" evidence="1">
    <location>
        <position position="145"/>
    </location>
</feature>
<feature type="glycosylation site" description="N-linked (GlcNAc...) asparagine" evidence="3">
    <location>
        <position position="207"/>
    </location>
</feature>
<feature type="glycosylation site" description="N-linked (GlcNAc...) asparagine" evidence="3">
    <location>
        <position position="216"/>
    </location>
</feature>
<feature type="glycosylation site" description="N-linked (GlcNAc...) asparagine" evidence="3">
    <location>
        <position position="274"/>
    </location>
</feature>
<feature type="glycosylation site" description="N-linked (GlcNAc...) asparagine" evidence="3">
    <location>
        <position position="346"/>
    </location>
</feature>
<feature type="glycosylation site" description="N-linked (GlcNAc...) asparagine" evidence="3">
    <location>
        <position position="362"/>
    </location>
</feature>
<feature type="glycosylation site" description="N-linked (GlcNAc...) asparagine" evidence="3">
    <location>
        <position position="373"/>
    </location>
</feature>
<feature type="glycosylation site" description="N-linked (GlcNAc...) asparagine" evidence="3">
    <location>
        <position position="381"/>
    </location>
</feature>
<feature type="glycosylation site" description="N-linked (GlcNAc...) asparagine" evidence="3">
    <location>
        <position position="387"/>
    </location>
</feature>
<feature type="glycosylation site" description="N-linked (GlcNAc...) asparagine" evidence="3">
    <location>
        <position position="393"/>
    </location>
</feature>
<feature type="glycosylation site" description="N-linked (GlcNAc...) asparagine" evidence="3">
    <location>
        <position position="420"/>
    </location>
</feature>
<comment type="catalytic activity">
    <reaction>
        <text>L-cysteinyl-[protein] + hexadecanoyl-CoA = S-hexadecanoyl-L-cysteinyl-[protein] + CoA</text>
        <dbReference type="Rhea" id="RHEA:36683"/>
        <dbReference type="Rhea" id="RHEA-COMP:10131"/>
        <dbReference type="Rhea" id="RHEA-COMP:11032"/>
        <dbReference type="ChEBI" id="CHEBI:29950"/>
        <dbReference type="ChEBI" id="CHEBI:57287"/>
        <dbReference type="ChEBI" id="CHEBI:57379"/>
        <dbReference type="ChEBI" id="CHEBI:74151"/>
        <dbReference type="EC" id="2.3.1.225"/>
    </reaction>
</comment>
<comment type="subcellular location">
    <subcellularLocation>
        <location evidence="3">Membrane</location>
        <topology evidence="3">Multi-pass membrane protein</topology>
    </subcellularLocation>
</comment>
<comment type="domain">
    <text evidence="2">The DHHC domain is required for palmitoyltransferase activity.</text>
</comment>
<comment type="similarity">
    <text evidence="3">Belongs to the DHHC palmitoyltransferase family.</text>
</comment>
<comment type="sequence caution" evidence="6">
    <conflict type="erroneous gene model prediction">
        <sequence resource="EMBL-CDS" id="EAL69000"/>
    </conflict>
</comment>
<reference evidence="6" key="1">
    <citation type="journal article" date="2002" name="Nature">
        <title>Sequence and analysis of chromosome 2 of Dictyostelium discoideum.</title>
        <authorList>
            <person name="Gloeckner G."/>
            <person name="Eichinger L."/>
            <person name="Szafranski K."/>
            <person name="Pachebat J.A."/>
            <person name="Bankier A.T."/>
            <person name="Dear P.H."/>
            <person name="Lehmann R."/>
            <person name="Baumgart C."/>
            <person name="Parra G."/>
            <person name="Abril J.F."/>
            <person name="Guigo R."/>
            <person name="Kumpf K."/>
            <person name="Tunggal B."/>
            <person name="Cox E.C."/>
            <person name="Quail M.A."/>
            <person name="Platzer M."/>
            <person name="Rosenthal A."/>
            <person name="Noegel A.A."/>
        </authorList>
    </citation>
    <scope>NUCLEOTIDE SEQUENCE [LARGE SCALE GENOMIC DNA]</scope>
    <source>
        <strain>AX4</strain>
    </source>
</reference>
<reference evidence="6" key="2">
    <citation type="journal article" date="2005" name="Nature">
        <title>The genome of the social amoeba Dictyostelium discoideum.</title>
        <authorList>
            <person name="Eichinger L."/>
            <person name="Pachebat J.A."/>
            <person name="Gloeckner G."/>
            <person name="Rajandream M.A."/>
            <person name="Sucgang R."/>
            <person name="Berriman M."/>
            <person name="Song J."/>
            <person name="Olsen R."/>
            <person name="Szafranski K."/>
            <person name="Xu Q."/>
            <person name="Tunggal B."/>
            <person name="Kummerfeld S."/>
            <person name="Madera M."/>
            <person name="Konfortov B.A."/>
            <person name="Rivero F."/>
            <person name="Bankier A.T."/>
            <person name="Lehmann R."/>
            <person name="Hamlin N."/>
            <person name="Davies R."/>
            <person name="Gaudet P."/>
            <person name="Fey P."/>
            <person name="Pilcher K."/>
            <person name="Chen G."/>
            <person name="Saunders D."/>
            <person name="Sodergren E.J."/>
            <person name="Davis P."/>
            <person name="Kerhornou A."/>
            <person name="Nie X."/>
            <person name="Hall N."/>
            <person name="Anjard C."/>
            <person name="Hemphill L."/>
            <person name="Bason N."/>
            <person name="Farbrother P."/>
            <person name="Desany B."/>
            <person name="Just E."/>
            <person name="Morio T."/>
            <person name="Rost R."/>
            <person name="Churcher C.M."/>
            <person name="Cooper J."/>
            <person name="Haydock S."/>
            <person name="van Driessche N."/>
            <person name="Cronin A."/>
            <person name="Goodhead I."/>
            <person name="Muzny D.M."/>
            <person name="Mourier T."/>
            <person name="Pain A."/>
            <person name="Lu M."/>
            <person name="Harper D."/>
            <person name="Lindsay R."/>
            <person name="Hauser H."/>
            <person name="James K.D."/>
            <person name="Quiles M."/>
            <person name="Madan Babu M."/>
            <person name="Saito T."/>
            <person name="Buchrieser C."/>
            <person name="Wardroper A."/>
            <person name="Felder M."/>
            <person name="Thangavelu M."/>
            <person name="Johnson D."/>
            <person name="Knights A."/>
            <person name="Loulseged H."/>
            <person name="Mungall K.L."/>
            <person name="Oliver K."/>
            <person name="Price C."/>
            <person name="Quail M.A."/>
            <person name="Urushihara H."/>
            <person name="Hernandez J."/>
            <person name="Rabbinowitsch E."/>
            <person name="Steffen D."/>
            <person name="Sanders M."/>
            <person name="Ma J."/>
            <person name="Kohara Y."/>
            <person name="Sharp S."/>
            <person name="Simmonds M.N."/>
            <person name="Spiegler S."/>
            <person name="Tivey A."/>
            <person name="Sugano S."/>
            <person name="White B."/>
            <person name="Walker D."/>
            <person name="Woodward J.R."/>
            <person name="Winckler T."/>
            <person name="Tanaka Y."/>
            <person name="Shaulsky G."/>
            <person name="Schleicher M."/>
            <person name="Weinstock G.M."/>
            <person name="Rosenthal A."/>
            <person name="Cox E.C."/>
            <person name="Chisholm R.L."/>
            <person name="Gibbs R.A."/>
            <person name="Loomis W.F."/>
            <person name="Platzer M."/>
            <person name="Kay R.R."/>
            <person name="Williams J.G."/>
            <person name="Dear P.H."/>
            <person name="Noegel A.A."/>
            <person name="Barrell B.G."/>
            <person name="Kuspa A."/>
        </authorList>
    </citation>
    <scope>NUCLEOTIDE SEQUENCE [LARGE SCALE GENOMIC DNA]</scope>
    <source>
        <strain>AX4</strain>
    </source>
</reference>
<keyword id="KW-0012">Acyltransferase</keyword>
<keyword id="KW-0325">Glycoprotein</keyword>
<keyword id="KW-0449">Lipoprotein</keyword>
<keyword id="KW-0472">Membrane</keyword>
<keyword id="KW-0564">Palmitate</keyword>
<keyword id="KW-1185">Reference proteome</keyword>
<keyword id="KW-0808">Transferase</keyword>
<keyword id="KW-0812">Transmembrane</keyword>
<keyword id="KW-1133">Transmembrane helix</keyword>
<name>ZDHC1_DICDI</name>
<proteinExistence type="inferred from homology"/>
<sequence length="434" mass="49641">MSRPSYASATKTYFHNRLVTGPDRAYFIVAMILMLIPEIPFLIFVCPLFEEWITAAIYPVSIYFWIASYIFLIQTAYTDPGIIPRGIYNDDIFAPDHRQPLFKKITVKDTKQEIKWCETCCLYRPPRANHCGICNNCVERFDHHCPWVGNCIGRRNYQTFLYFLYSLGFLCIWIMGFCVAHICIESARYRDNHPSASSAKVFQEGMNKSHYISDYNYSLWVSRFNSNPYRKSAFANFIEAFCPPRYPSFYKYTLDHEKELTTIPTPNNINGNNNNSINNNNNNNNNNNNNNNNNNNNNNNNNNINNGNSGGTTNNGYTPPISPPQMLQRQSSTIRYSLDNLRTSSNSSLGNFNNLKSSRDLNLSTISEDKPKNLSNSNNNNNTNNKNTSEDNNHSSGSDFGGDEENNEDDFKSDNDKEINSSSLSLNHELQVNV</sequence>
<gene>
    <name type="ORF">DDB_G0276997</name>
</gene>
<accession>Q550R7</accession>
<accession>Q7KWX8</accession>